<dbReference type="EMBL" id="CP001657">
    <property type="protein sequence ID" value="ACT14802.1"/>
    <property type="molecule type" value="Genomic_DNA"/>
</dbReference>
<dbReference type="RefSeq" id="WP_015841913.1">
    <property type="nucleotide sequence ID" value="NC_012917.1"/>
</dbReference>
<dbReference type="SMR" id="C6DFR3"/>
<dbReference type="STRING" id="561230.PC1_3787"/>
<dbReference type="GeneID" id="67792316"/>
<dbReference type="KEGG" id="pct:PC1_3787"/>
<dbReference type="eggNOG" id="COG2922">
    <property type="taxonomic scope" value="Bacteria"/>
</dbReference>
<dbReference type="HOGENOM" id="CLU_133242_0_0_6"/>
<dbReference type="OrthoDB" id="9788984at2"/>
<dbReference type="Proteomes" id="UP000002736">
    <property type="component" value="Chromosome"/>
</dbReference>
<dbReference type="HAMAP" id="MF_00598">
    <property type="entry name" value="Smg"/>
    <property type="match status" value="1"/>
</dbReference>
<dbReference type="InterPro" id="IPR007456">
    <property type="entry name" value="Smg"/>
</dbReference>
<dbReference type="NCBIfam" id="NF002897">
    <property type="entry name" value="PRK03430.1"/>
    <property type="match status" value="1"/>
</dbReference>
<dbReference type="PANTHER" id="PTHR38692">
    <property type="entry name" value="PROTEIN SMG"/>
    <property type="match status" value="1"/>
</dbReference>
<dbReference type="PANTHER" id="PTHR38692:SF1">
    <property type="entry name" value="PROTEIN SMG"/>
    <property type="match status" value="1"/>
</dbReference>
<dbReference type="Pfam" id="PF04361">
    <property type="entry name" value="DUF494"/>
    <property type="match status" value="1"/>
</dbReference>
<organism>
    <name type="scientific">Pectobacterium carotovorum subsp. carotovorum (strain PC1)</name>
    <dbReference type="NCBI Taxonomy" id="561230"/>
    <lineage>
        <taxon>Bacteria</taxon>
        <taxon>Pseudomonadati</taxon>
        <taxon>Pseudomonadota</taxon>
        <taxon>Gammaproteobacteria</taxon>
        <taxon>Enterobacterales</taxon>
        <taxon>Pectobacteriaceae</taxon>
        <taxon>Pectobacterium</taxon>
    </lineage>
</organism>
<feature type="chain" id="PRO_1000212184" description="Protein Smg">
    <location>
        <begin position="1"/>
        <end position="157"/>
    </location>
</feature>
<proteinExistence type="inferred from homology"/>
<accession>C6DFR3</accession>
<name>SMG_PECCP</name>
<evidence type="ECO:0000255" key="1">
    <source>
        <dbReference type="HAMAP-Rule" id="MF_00598"/>
    </source>
</evidence>
<comment type="similarity">
    <text evidence="1">Belongs to the Smg family.</text>
</comment>
<sequence length="157" mass="18511">MFDVLMYLFESYIHNETEMRVDQDTLTDDLTRAGFDRNDIYSALSWLEKLADIQEGQTAPLYLANDPLAMRIYTQDETLRLDAECRGFLLFLEQIQVLNLETREMVIERVMALETQEFDLEDLKWVILMVLFNVPGCENAYQQMEELLFEVNDGYVQ</sequence>
<protein>
    <recommendedName>
        <fullName evidence="1">Protein Smg</fullName>
    </recommendedName>
</protein>
<reference key="1">
    <citation type="submission" date="2009-07" db="EMBL/GenBank/DDBJ databases">
        <title>Complete sequence of Pectobacterium carotovorum subsp. carotovorum PC1.</title>
        <authorList>
            <consortium name="US DOE Joint Genome Institute"/>
            <person name="Lucas S."/>
            <person name="Copeland A."/>
            <person name="Lapidus A."/>
            <person name="Glavina del Rio T."/>
            <person name="Tice H."/>
            <person name="Bruce D."/>
            <person name="Goodwin L."/>
            <person name="Pitluck S."/>
            <person name="Munk A.C."/>
            <person name="Brettin T."/>
            <person name="Detter J.C."/>
            <person name="Han C."/>
            <person name="Tapia R."/>
            <person name="Larimer F."/>
            <person name="Land M."/>
            <person name="Hauser L."/>
            <person name="Kyrpides N."/>
            <person name="Mikhailova N."/>
            <person name="Balakrishnan V."/>
            <person name="Glasner J."/>
            <person name="Perna N.T."/>
        </authorList>
    </citation>
    <scope>NUCLEOTIDE SEQUENCE [LARGE SCALE GENOMIC DNA]</scope>
    <source>
        <strain>PC1</strain>
    </source>
</reference>
<gene>
    <name evidence="1" type="primary">smg</name>
    <name type="ordered locus">PC1_3787</name>
</gene>